<protein>
    <recommendedName>
        <fullName evidence="6">Thaumatin I</fullName>
    </recommendedName>
    <alternativeName>
        <fullName evidence="7">Thaumatin-1</fullName>
    </alternativeName>
</protein>
<reference key="1">
    <citation type="journal article" date="2007" name="Biochem. Biophys. Res. Commun.">
        <title>Effects of pre- and pro-sequence of thaumatin on the secretion by Pichia pastoris.</title>
        <authorList>
            <person name="Ide N."/>
            <person name="Masuda T."/>
            <person name="Kitabatake N."/>
        </authorList>
    </citation>
    <scope>NUCLEOTIDE SEQUENCE [MRNA]</scope>
</reference>
<reference key="2">
    <citation type="journal article" date="2007" name="Biotechnol. Prog.">
        <title>Cloning of the thaumatin I cDNA and characterization of recombinant thaumatin I secreted by Pichia pastoris.</title>
        <authorList>
            <person name="Ide N."/>
            <person name="Kaneko R."/>
            <person name="Wada R."/>
            <person name="Mehta A."/>
            <person name="Tamaki S."/>
            <person name="Tsuruta T."/>
            <person name="Fujita Y."/>
            <person name="Masuda T."/>
            <person name="Kitabatake N."/>
        </authorList>
    </citation>
    <scope>NUCLEOTIDE SEQUENCE [MRNA] OF 23-229</scope>
</reference>
<reference key="3">
    <citation type="journal article" date="1979" name="Eur. J. Biochem.">
        <title>The complete amino-acid sequence of the sweet protein thaumatin I.</title>
        <authorList>
            <person name="Iyengar R.B."/>
            <person name="Smits P."/>
            <person name="van der Ouderaa F."/>
            <person name="van der Wel H."/>
            <person name="van Brouwershaven J."/>
            <person name="Ravestein P."/>
            <person name="Richters G."/>
            <person name="van Wassenaar P.D."/>
        </authorList>
    </citation>
    <scope>PROTEIN SEQUENCE OF 23-229</scope>
</reference>
<reference key="4">
    <citation type="journal article" date="1985" name="Proc. Natl. Acad. Sci. U.S.A.">
        <title>Three-dimensional structure of thaumatin I, an intensely sweet protein.</title>
        <authorList>
            <person name="de Vos A.M."/>
            <person name="Hatada M."/>
            <person name="van der Wel H."/>
            <person name="Krabbendam H."/>
            <person name="Peerdeman A.F."/>
            <person name="Kim S.-H."/>
        </authorList>
    </citation>
    <scope>X-RAY CRYSTALLOGRAPHY (3.0 ANGSTROMS) OF 23-229</scope>
    <scope>DISULFIDE BONDS</scope>
    <scope>FUNCTION</scope>
</reference>
<reference key="5">
    <citation type="journal article" date="1990" name="J. Biomol. Struct. Dyn.">
        <title>X-ray analysis of new crystal forms of the sweet protein thaumatin.</title>
        <authorList>
            <person name="McPherson A."/>
            <person name="Weickmann J."/>
        </authorList>
    </citation>
    <scope>X-RAY CRYSTALLOGRAPHY (2.3 ANGSTROMS) OF 23-229</scope>
</reference>
<reference key="6">
    <citation type="journal article" date="1992" name="J. Mol. Biol.">
        <title>Crystal structure of a sweet tasting protein thaumatin I, at 1.65-A resolution.</title>
        <authorList>
            <person name="Ogata C.M."/>
            <person name="Gordon P.F."/>
            <person name="de Vos A.M."/>
            <person name="Kim S.-H."/>
        </authorList>
    </citation>
    <scope>X-RAY CRYSTALLOGRAPHY (1.65 ANGSTROMS) OF 23-229</scope>
</reference>
<reference key="7">
    <citation type="journal article" date="2007" name="Acta Crystallogr. D">
        <title>On the routine use of soft X-rays in macromolecular crystallography. Part IV. Efficient determination of anomalous substructures in biomacromolecules using longer X-ray wavelengths.</title>
        <authorList>
            <person name="Mueller-Dieckmann C."/>
            <person name="Panjikar S."/>
            <person name="Schmidt A."/>
            <person name="Mueller S."/>
            <person name="Kuper J."/>
            <person name="Geerlof A."/>
            <person name="Wilmanns M."/>
            <person name="Singh R.K."/>
            <person name="Tucker P.A."/>
            <person name="Weiss M.S."/>
        </authorList>
    </citation>
    <scope>X-RAY CRYSTALLOGRAPHY (1.98 ANGSTROMS) OF 23-229</scope>
    <scope>DISULFIDE BONDS</scope>
</reference>
<reference key="8">
    <citation type="journal article" date="2015" name="Nat. Methods">
        <title>Grease matrix as a versatile carrier of proteins for serial crystallography.</title>
        <authorList>
            <person name="Sugahara M."/>
            <person name="Mizohata E."/>
            <person name="Nango E."/>
            <person name="Suzuki M."/>
            <person name="Tanaka T."/>
            <person name="Masuda T."/>
            <person name="Tanaka R."/>
            <person name="Shimamura T."/>
            <person name="Tanaka Y."/>
            <person name="Suno C."/>
            <person name="Ihara K."/>
            <person name="Pan D."/>
            <person name="Kakinouchi K."/>
            <person name="Sugiyama S."/>
            <person name="Murata M."/>
            <person name="Inoue T."/>
            <person name="Tono K."/>
            <person name="Song C."/>
            <person name="Park J."/>
            <person name="Kameshima T."/>
            <person name="Hatsui T."/>
            <person name="Joti Y."/>
            <person name="Yabashi M."/>
            <person name="Iwata S."/>
        </authorList>
    </citation>
    <scope>X-RAY CRYSTALLOGRAPHY (2.00 ANGSTROMS) OF 23-229</scope>
    <scope>DISULFIDE BONDS</scope>
</reference>
<sequence>MAATTCFFFLFPFLLLLTLSRAATFEIVNRCSYTVWAAASKGDAALDAGGRQLNSGESWTINVEPGTNGGKIWARTDCYFDDSGSGICKTGDCGGLLRCKRFGRPPTTLAEFSLNQYGKDYIDISNIKGFNVPMDFSPTTRGCRGVRCAADIVGQCPAKLKAPGGGCNDACTVFQTSEYCCTTGKCGPTEYSRFFKRLCPDAFSYVLDKPTTVTCPGSSNYRVTFCPTALELEDE</sequence>
<name>THM1_THADA</name>
<dbReference type="EMBL" id="AB265690">
    <property type="protein sequence ID" value="BAF44567.1"/>
    <property type="molecule type" value="mRNA"/>
</dbReference>
<dbReference type="EMBL" id="AF355098">
    <property type="protein sequence ID" value="AAL83964.1"/>
    <property type="molecule type" value="mRNA"/>
</dbReference>
<dbReference type="PIR" id="A03377">
    <property type="entry name" value="QTTC1"/>
</dbReference>
<dbReference type="PDB" id="1LR2">
    <property type="method" value="X-ray"/>
    <property type="resolution" value="1.80 A"/>
    <property type="chains" value="A=23-229"/>
</dbReference>
<dbReference type="PDB" id="1LR3">
    <property type="method" value="X-ray"/>
    <property type="resolution" value="1.80 A"/>
    <property type="chains" value="A=23-229"/>
</dbReference>
<dbReference type="PDB" id="1LXZ">
    <property type="method" value="X-ray"/>
    <property type="resolution" value="1.25 A"/>
    <property type="chains" value="A=23-229"/>
</dbReference>
<dbReference type="PDB" id="1LY0">
    <property type="method" value="X-ray"/>
    <property type="resolution" value="1.36 A"/>
    <property type="chains" value="A=23-229"/>
</dbReference>
<dbReference type="PDB" id="1PP3">
    <property type="method" value="X-ray"/>
    <property type="resolution" value="1.60 A"/>
    <property type="chains" value="A/B=23-229"/>
</dbReference>
<dbReference type="PDB" id="1RQW">
    <property type="method" value="X-ray"/>
    <property type="resolution" value="1.05 A"/>
    <property type="chains" value="A=23-229"/>
</dbReference>
<dbReference type="PDB" id="1THI">
    <property type="method" value="X-ray"/>
    <property type="resolution" value="3.20 A"/>
    <property type="chains" value="A=23-229"/>
</dbReference>
<dbReference type="PDB" id="1THU">
    <property type="method" value="X-ray"/>
    <property type="resolution" value="2.60 A"/>
    <property type="chains" value="A=23-229"/>
</dbReference>
<dbReference type="PDB" id="1THV">
    <property type="method" value="X-ray"/>
    <property type="resolution" value="1.75 A"/>
    <property type="chains" value="A=23-229"/>
</dbReference>
<dbReference type="PDB" id="1THW">
    <property type="method" value="X-ray"/>
    <property type="resolution" value="1.75 A"/>
    <property type="chains" value="A=23-229"/>
</dbReference>
<dbReference type="PDB" id="2A7I">
    <property type="method" value="X-ray"/>
    <property type="resolution" value="1.75 A"/>
    <property type="chains" value="X=23-229"/>
</dbReference>
<dbReference type="PDB" id="2BLR">
    <property type="method" value="X-ray"/>
    <property type="resolution" value="1.40 A"/>
    <property type="chains" value="A=23-228"/>
</dbReference>
<dbReference type="PDB" id="2BLU">
    <property type="method" value="X-ray"/>
    <property type="resolution" value="1.40 A"/>
    <property type="chains" value="A=23-228"/>
</dbReference>
<dbReference type="PDB" id="2D8O">
    <property type="method" value="X-ray"/>
    <property type="resolution" value="2.38 A"/>
    <property type="chains" value="A=23-229"/>
</dbReference>
<dbReference type="PDB" id="2D8P">
    <property type="method" value="X-ray"/>
    <property type="resolution" value="2.30 A"/>
    <property type="chains" value="A=23-229"/>
</dbReference>
<dbReference type="PDB" id="2G4Y">
    <property type="method" value="X-ray"/>
    <property type="resolution" value="1.98 A"/>
    <property type="chains" value="A=23-229"/>
</dbReference>
<dbReference type="PDB" id="2OQN">
    <property type="method" value="X-ray"/>
    <property type="resolution" value="1.90 A"/>
    <property type="chains" value="A=23-229"/>
</dbReference>
<dbReference type="PDB" id="2PE7">
    <property type="method" value="X-ray"/>
    <property type="resolution" value="1.46 A"/>
    <property type="chains" value="A=23-229"/>
</dbReference>
<dbReference type="PDB" id="2VHK">
    <property type="method" value="X-ray"/>
    <property type="resolution" value="0.94 A"/>
    <property type="chains" value="A=23-228"/>
</dbReference>
<dbReference type="PDB" id="2VHR">
    <property type="method" value="X-ray"/>
    <property type="resolution" value="0.95 A"/>
    <property type="chains" value="A=23-229"/>
</dbReference>
<dbReference type="PDB" id="2VI1">
    <property type="method" value="X-ray"/>
    <property type="resolution" value="1.04 A"/>
    <property type="chains" value="A=23-229"/>
</dbReference>
<dbReference type="PDB" id="2VI2">
    <property type="method" value="X-ray"/>
    <property type="resolution" value="1.08 A"/>
    <property type="chains" value="A=23-229"/>
</dbReference>
<dbReference type="PDB" id="2VI3">
    <property type="method" value="X-ray"/>
    <property type="resolution" value="0.98 A"/>
    <property type="chains" value="A=23-229"/>
</dbReference>
<dbReference type="PDB" id="2VI4">
    <property type="method" value="X-ray"/>
    <property type="resolution" value="1.10 A"/>
    <property type="chains" value="A=23-229"/>
</dbReference>
<dbReference type="PDB" id="2VU6">
    <property type="method" value="X-ray"/>
    <property type="resolution" value="0.95 A"/>
    <property type="chains" value="A=23-229"/>
</dbReference>
<dbReference type="PDB" id="2VU7">
    <property type="method" value="X-ray"/>
    <property type="resolution" value="1.08 A"/>
    <property type="chains" value="A=23-229"/>
</dbReference>
<dbReference type="PDB" id="2WBZ">
    <property type="method" value="X-ray"/>
    <property type="resolution" value="1.60 A"/>
    <property type="chains" value="A=23-228"/>
</dbReference>
<dbReference type="PDB" id="3AL7">
    <property type="method" value="X-ray"/>
    <property type="resolution" value="1.10 A"/>
    <property type="chains" value="A=23-229"/>
</dbReference>
<dbReference type="PDB" id="3ALD">
    <property type="method" value="X-ray"/>
    <property type="resolution" value="1.10 A"/>
    <property type="chains" value="A=23-229"/>
</dbReference>
<dbReference type="PDB" id="3DZN">
    <property type="method" value="X-ray"/>
    <property type="resolution" value="1.51 A"/>
    <property type="chains" value="A=23-229"/>
</dbReference>
<dbReference type="PDB" id="3DZP">
    <property type="method" value="X-ray"/>
    <property type="resolution" value="1.51 A"/>
    <property type="chains" value="A=23-229"/>
</dbReference>
<dbReference type="PDB" id="3DZR">
    <property type="method" value="X-ray"/>
    <property type="resolution" value="1.51 A"/>
    <property type="chains" value="A=23-229"/>
</dbReference>
<dbReference type="PDB" id="3E0A">
    <property type="method" value="X-ray"/>
    <property type="resolution" value="1.51 A"/>
    <property type="chains" value="A=23-229"/>
</dbReference>
<dbReference type="PDB" id="3E3S">
    <property type="method" value="X-ray"/>
    <property type="resolution" value="1.73 A"/>
    <property type="chains" value="A=23-229"/>
</dbReference>
<dbReference type="PDB" id="3N02">
    <property type="method" value="X-ray"/>
    <property type="resolution" value="1.50 A"/>
    <property type="chains" value="A=23-228"/>
</dbReference>
<dbReference type="PDB" id="3N03">
    <property type="method" value="X-ray"/>
    <property type="resolution" value="1.50 A"/>
    <property type="chains" value="A=23-228"/>
</dbReference>
<dbReference type="PDB" id="3QY5">
    <property type="method" value="X-ray"/>
    <property type="resolution" value="1.25 A"/>
    <property type="chains" value="A=23-229"/>
</dbReference>
<dbReference type="PDB" id="3V7V">
    <property type="method" value="X-ray"/>
    <property type="resolution" value="2.30 A"/>
    <property type="chains" value="A=23-229"/>
</dbReference>
<dbReference type="PDB" id="3V82">
    <property type="method" value="X-ray"/>
    <property type="resolution" value="2.30 A"/>
    <property type="chains" value="A=23-229"/>
</dbReference>
<dbReference type="PDB" id="3V84">
    <property type="method" value="X-ray"/>
    <property type="resolution" value="2.30 A"/>
    <property type="chains" value="A=23-229"/>
</dbReference>
<dbReference type="PDB" id="3V87">
    <property type="method" value="X-ray"/>
    <property type="resolution" value="2.30 A"/>
    <property type="chains" value="A=23-229"/>
</dbReference>
<dbReference type="PDB" id="3V88">
    <property type="method" value="X-ray"/>
    <property type="resolution" value="2.30 A"/>
    <property type="chains" value="A=23-229"/>
</dbReference>
<dbReference type="PDB" id="3V8A">
    <property type="method" value="X-ray"/>
    <property type="resolution" value="2.30 A"/>
    <property type="chains" value="A=23-229"/>
</dbReference>
<dbReference type="PDB" id="3VCE">
    <property type="method" value="X-ray"/>
    <property type="resolution" value="2.30 A"/>
    <property type="chains" value="A=23-229"/>
</dbReference>
<dbReference type="PDB" id="3VCG">
    <property type="method" value="X-ray"/>
    <property type="resolution" value="2.30 A"/>
    <property type="chains" value="A=23-229"/>
</dbReference>
<dbReference type="PDB" id="3VCH">
    <property type="method" value="X-ray"/>
    <property type="resolution" value="2.30 A"/>
    <property type="chains" value="A=23-229"/>
</dbReference>
<dbReference type="PDB" id="3VCI">
    <property type="method" value="X-ray"/>
    <property type="resolution" value="2.30 A"/>
    <property type="chains" value="A=23-229"/>
</dbReference>
<dbReference type="PDB" id="3VCJ">
    <property type="method" value="X-ray"/>
    <property type="resolution" value="2.30 A"/>
    <property type="chains" value="A=23-229"/>
</dbReference>
<dbReference type="PDB" id="3VCK">
    <property type="method" value="X-ray"/>
    <property type="resolution" value="2.30 A"/>
    <property type="chains" value="A=23-229"/>
</dbReference>
<dbReference type="PDB" id="3VHF">
    <property type="method" value="X-ray"/>
    <property type="resolution" value="1.39 A"/>
    <property type="chains" value="A=23-229"/>
</dbReference>
<dbReference type="PDB" id="3VHG">
    <property type="method" value="X-ray"/>
    <property type="resolution" value="1.00 A"/>
    <property type="chains" value="A=23-229"/>
</dbReference>
<dbReference type="PDB" id="3VJQ">
    <property type="method" value="X-ray"/>
    <property type="resolution" value="1.00 A"/>
    <property type="chains" value="A=23-229"/>
</dbReference>
<dbReference type="PDB" id="3WXS">
    <property type="method" value="X-ray"/>
    <property type="resolution" value="2.00 A"/>
    <property type="chains" value="A=23-229"/>
</dbReference>
<dbReference type="PDB" id="3X3O">
    <property type="method" value="X-ray"/>
    <property type="resolution" value="1.48 A"/>
    <property type="chains" value="A=23-229"/>
</dbReference>
<dbReference type="PDB" id="3X3P">
    <property type="method" value="X-ray"/>
    <property type="resolution" value="1.48 A"/>
    <property type="chains" value="A=23-229"/>
</dbReference>
<dbReference type="PDB" id="3X3Q">
    <property type="method" value="X-ray"/>
    <property type="resolution" value="1.50 A"/>
    <property type="chains" value="A=23-229"/>
</dbReference>
<dbReference type="PDB" id="3X3R">
    <property type="method" value="X-ray"/>
    <property type="resolution" value="1.52 A"/>
    <property type="chains" value="A=23-229"/>
</dbReference>
<dbReference type="PDB" id="3X3S">
    <property type="method" value="X-ray"/>
    <property type="resolution" value="1.46 A"/>
    <property type="chains" value="A=23-229"/>
</dbReference>
<dbReference type="PDB" id="3X3T">
    <property type="method" value="X-ray"/>
    <property type="resolution" value="1.50 A"/>
    <property type="chains" value="A=23-229"/>
</dbReference>
<dbReference type="PDB" id="3ZEJ">
    <property type="method" value="X-ray"/>
    <property type="resolution" value="1.55 A"/>
    <property type="chains" value="A=23-229"/>
</dbReference>
<dbReference type="PDB" id="4AXR">
    <property type="method" value="X-ray"/>
    <property type="resolution" value="1.38 A"/>
    <property type="chains" value="A=23-229"/>
</dbReference>
<dbReference type="PDB" id="4AXU">
    <property type="method" value="X-ray"/>
    <property type="resolution" value="1.38 A"/>
    <property type="chains" value="A=23-228"/>
</dbReference>
<dbReference type="PDB" id="4BAL">
    <property type="method" value="X-ray"/>
    <property type="resolution" value="1.30 A"/>
    <property type="chains" value="A=23-229"/>
</dbReference>
<dbReference type="PDB" id="4BAR">
    <property type="method" value="X-ray"/>
    <property type="resolution" value="1.20 A"/>
    <property type="chains" value="A=23-229"/>
</dbReference>
<dbReference type="PDB" id="4C3C">
    <property type="method" value="X-ray"/>
    <property type="resolution" value="1.80 A"/>
    <property type="chains" value="A=23-229"/>
</dbReference>
<dbReference type="PDB" id="4DC5">
    <property type="method" value="X-ray"/>
    <property type="resolution" value="1.48 A"/>
    <property type="chains" value="A=23-229"/>
</dbReference>
<dbReference type="PDB" id="4DC6">
    <property type="method" value="X-ray"/>
    <property type="resolution" value="1.48 A"/>
    <property type="chains" value="A=23-229"/>
</dbReference>
<dbReference type="PDB" id="4DIY">
    <property type="method" value="X-ray"/>
    <property type="resolution" value="1.98 A"/>
    <property type="chains" value="A=23-229"/>
</dbReference>
<dbReference type="PDB" id="4DIZ">
    <property type="method" value="X-ray"/>
    <property type="resolution" value="1.98 A"/>
    <property type="chains" value="A=23-229"/>
</dbReference>
<dbReference type="PDB" id="4DJ0">
    <property type="method" value="X-ray"/>
    <property type="resolution" value="1.98 A"/>
    <property type="chains" value="A=23-229"/>
</dbReference>
<dbReference type="PDB" id="4DJ1">
    <property type="method" value="X-ray"/>
    <property type="resolution" value="1.98 A"/>
    <property type="chains" value="A=23-229"/>
</dbReference>
<dbReference type="PDB" id="4EK0">
    <property type="method" value="X-ray"/>
    <property type="resolution" value="1.52 A"/>
    <property type="chains" value="A=23-229"/>
</dbReference>
<dbReference type="PDB" id="4EKA">
    <property type="method" value="X-ray"/>
    <property type="resolution" value="1.55 A"/>
    <property type="chains" value="A=23-229"/>
</dbReference>
<dbReference type="PDB" id="4EKB">
    <property type="method" value="X-ray"/>
    <property type="resolution" value="1.52 A"/>
    <property type="chains" value="A=23-229"/>
</dbReference>
<dbReference type="PDB" id="4EKH">
    <property type="method" value="X-ray"/>
    <property type="resolution" value="1.75 A"/>
    <property type="chains" value="A=23-229"/>
</dbReference>
<dbReference type="PDB" id="4EKO">
    <property type="method" value="X-ray"/>
    <property type="resolution" value="1.52 A"/>
    <property type="chains" value="A=23-229"/>
</dbReference>
<dbReference type="PDB" id="4EKT">
    <property type="method" value="X-ray"/>
    <property type="resolution" value="1.75 A"/>
    <property type="chains" value="A=23-229"/>
</dbReference>
<dbReference type="PDB" id="4EL2">
    <property type="method" value="X-ray"/>
    <property type="resolution" value="1.52 A"/>
    <property type="chains" value="A=23-229"/>
</dbReference>
<dbReference type="PDB" id="4EL3">
    <property type="method" value="X-ray"/>
    <property type="resolution" value="1.95 A"/>
    <property type="chains" value="A=23-229"/>
</dbReference>
<dbReference type="PDB" id="4EL7">
    <property type="method" value="X-ray"/>
    <property type="resolution" value="1.52 A"/>
    <property type="chains" value="A=23-229"/>
</dbReference>
<dbReference type="PDB" id="4ELA">
    <property type="method" value="X-ray"/>
    <property type="resolution" value="2.00 A"/>
    <property type="chains" value="A=23-229"/>
</dbReference>
<dbReference type="PDB" id="4TVT">
    <property type="method" value="X-ray"/>
    <property type="resolution" value="1.20 A"/>
    <property type="chains" value="A=23-229"/>
</dbReference>
<dbReference type="PDB" id="4XVB">
    <property type="method" value="X-ray"/>
    <property type="resolution" value="1.52 A"/>
    <property type="chains" value="A=23-229"/>
</dbReference>
<dbReference type="PDB" id="4ZG3">
    <property type="method" value="X-ray"/>
    <property type="resolution" value="1.20 A"/>
    <property type="chains" value="A=23-229"/>
</dbReference>
<dbReference type="PDB" id="4ZXR">
    <property type="method" value="X-ray"/>
    <property type="resolution" value="1.92 A"/>
    <property type="chains" value="A=23-229"/>
</dbReference>
<dbReference type="PDB" id="5A47">
    <property type="method" value="X-ray"/>
    <property type="resolution" value="1.20 A"/>
    <property type="chains" value="A=23-229"/>
</dbReference>
<dbReference type="PDB" id="5AMZ">
    <property type="method" value="X-ray"/>
    <property type="resolution" value="1.40 A"/>
    <property type="chains" value="A=23-228"/>
</dbReference>
<dbReference type="PDB" id="5AVG">
    <property type="method" value="X-ray"/>
    <property type="resolution" value="0.95 A"/>
    <property type="chains" value="A=23-228"/>
</dbReference>
<dbReference type="PDB" id="5FGT">
    <property type="method" value="X-ray"/>
    <property type="resolution" value="2.10 A"/>
    <property type="chains" value="A=23-229"/>
</dbReference>
<dbReference type="PDB" id="5FGX">
    <property type="method" value="X-ray"/>
    <property type="resolution" value="2.13 A"/>
    <property type="chains" value="A=23-229"/>
</dbReference>
<dbReference type="PDB" id="5GQP">
    <property type="method" value="X-ray"/>
    <property type="resolution" value="1.30 A"/>
    <property type="chains" value="A=23-229"/>
</dbReference>
<dbReference type="PDB" id="5JVX">
    <property type="method" value="X-ray"/>
    <property type="resolution" value="1.70 A"/>
    <property type="chains" value="A=23-229"/>
</dbReference>
<dbReference type="PDB" id="5K7Q">
    <property type="method" value="EM"/>
    <property type="resolution" value="2.50 A"/>
    <property type="chains" value="A=23-229"/>
</dbReference>
<dbReference type="PDB" id="5KVW">
    <property type="method" value="X-ray"/>
    <property type="resolution" value="1.59 A"/>
    <property type="chains" value="A=23-229"/>
</dbReference>
<dbReference type="PDB" id="5KVX">
    <property type="method" value="X-ray"/>
    <property type="resolution" value="1.59 A"/>
    <property type="chains" value="A=23-229"/>
</dbReference>
<dbReference type="PDB" id="5KVZ">
    <property type="method" value="X-ray"/>
    <property type="resolution" value="1.59 A"/>
    <property type="chains" value="A=23-229"/>
</dbReference>
<dbReference type="PDB" id="5KW0">
    <property type="method" value="X-ray"/>
    <property type="resolution" value="1.59 A"/>
    <property type="chains" value="A=23-229"/>
</dbReference>
<dbReference type="PDB" id="5KW3">
    <property type="method" value="X-ray"/>
    <property type="resolution" value="1.55 A"/>
    <property type="chains" value="A=23-229"/>
</dbReference>
<dbReference type="PDB" id="5KW4">
    <property type="method" value="X-ray"/>
    <property type="resolution" value="1.55 A"/>
    <property type="chains" value="A=23-229"/>
</dbReference>
<dbReference type="PDB" id="5KW5">
    <property type="method" value="X-ray"/>
    <property type="resolution" value="1.55 A"/>
    <property type="chains" value="A=23-229"/>
</dbReference>
<dbReference type="PDB" id="5KW7">
    <property type="method" value="X-ray"/>
    <property type="resolution" value="1.55 A"/>
    <property type="chains" value="A=23-229"/>
</dbReference>
<dbReference type="PDB" id="5KW8">
    <property type="method" value="X-ray"/>
    <property type="resolution" value="1.55 A"/>
    <property type="chains" value="A=23-229"/>
</dbReference>
<dbReference type="PDB" id="5L4R">
    <property type="method" value="X-ray"/>
    <property type="resolution" value="1.45 A"/>
    <property type="chains" value="A=23-229"/>
</dbReference>
<dbReference type="PDB" id="5LH0">
    <property type="method" value="X-ray"/>
    <property type="resolution" value="1.88 A"/>
    <property type="chains" value="A=23-229"/>
</dbReference>
<dbReference type="PDB" id="5LH1">
    <property type="method" value="X-ray"/>
    <property type="resolution" value="1.90 A"/>
    <property type="chains" value="A=23-229"/>
</dbReference>
<dbReference type="PDB" id="5LH3">
    <property type="method" value="X-ray"/>
    <property type="resolution" value="1.64 A"/>
    <property type="chains" value="A=23-229"/>
</dbReference>
<dbReference type="PDB" id="5LH5">
    <property type="method" value="X-ray"/>
    <property type="resolution" value="1.69 A"/>
    <property type="chains" value="A=23-229"/>
</dbReference>
<dbReference type="PDB" id="5LH6">
    <property type="method" value="X-ray"/>
    <property type="resolution" value="2.16 A"/>
    <property type="chains" value="A=23-229"/>
</dbReference>
<dbReference type="PDB" id="5LH7">
    <property type="method" value="X-ray"/>
    <property type="resolution" value="2.28 A"/>
    <property type="chains" value="A=23-229"/>
</dbReference>
<dbReference type="PDB" id="5LMH">
    <property type="method" value="X-ray"/>
    <property type="resolution" value="1.96 A"/>
    <property type="chains" value="A=23-229"/>
</dbReference>
<dbReference type="PDB" id="5LN0">
    <property type="method" value="X-ray"/>
    <property type="resolution" value="1.95 A"/>
    <property type="chains" value="A=23-229"/>
</dbReference>
<dbReference type="PDB" id="5MJG">
    <property type="method" value="X-ray"/>
    <property type="resolution" value="2.10 A"/>
    <property type="chains" value="A=23-229"/>
</dbReference>
<dbReference type="PDB" id="5SW0">
    <property type="method" value="X-ray"/>
    <property type="resolution" value="1.27 A"/>
    <property type="chains" value="A=23-229"/>
</dbReference>
<dbReference type="PDB" id="5SW1">
    <property type="method" value="X-ray"/>
    <property type="resolution" value="1.10 A"/>
    <property type="chains" value="A=23-229"/>
</dbReference>
<dbReference type="PDB" id="5SW2">
    <property type="method" value="X-ray"/>
    <property type="resolution" value="1.20 A"/>
    <property type="chains" value="A=23-229"/>
</dbReference>
<dbReference type="PDB" id="5T3G">
    <property type="method" value="X-ray"/>
    <property type="resolution" value="1.55 A"/>
    <property type="chains" value="A=23-229"/>
</dbReference>
<dbReference type="PDB" id="5TCL">
    <property type="method" value="X-ray"/>
    <property type="resolution" value="3.20 A"/>
    <property type="chains" value="A=23-229"/>
</dbReference>
<dbReference type="PDB" id="5WR8">
    <property type="method" value="X-ray"/>
    <property type="resolution" value="1.55 A"/>
    <property type="chains" value="A=23-229"/>
</dbReference>
<dbReference type="PDB" id="5X9L">
    <property type="method" value="X-ray"/>
    <property type="resolution" value="0.90 A"/>
    <property type="chains" value="A=23-229"/>
</dbReference>
<dbReference type="PDB" id="5X9M">
    <property type="method" value="X-ray"/>
    <property type="resolution" value="0.93 A"/>
    <property type="chains" value="A=23-229"/>
</dbReference>
<dbReference type="PDB" id="5YYP">
    <property type="method" value="X-ray"/>
    <property type="resolution" value="1.01 A"/>
    <property type="chains" value="A=23-229"/>
</dbReference>
<dbReference type="PDB" id="5YYQ">
    <property type="method" value="X-ray"/>
    <property type="resolution" value="1.07 A"/>
    <property type="chains" value="A=23-229"/>
</dbReference>
<dbReference type="PDB" id="5YYR">
    <property type="method" value="X-ray"/>
    <property type="resolution" value="1.07 A"/>
    <property type="chains" value="A=23-229"/>
</dbReference>
<dbReference type="PDB" id="6C5Y">
    <property type="method" value="X-ray"/>
    <property type="resolution" value="2.50 A"/>
    <property type="chains" value="A=23-229"/>
</dbReference>
<dbReference type="PDB" id="6C6W">
    <property type="method" value="X-ray"/>
    <property type="resolution" value="2.23 A"/>
    <property type="chains" value="A=23-229"/>
</dbReference>
<dbReference type="PDB" id="6COA">
    <property type="method" value="X-ray"/>
    <property type="resolution" value="1.20 A"/>
    <property type="chains" value="A=23-229"/>
</dbReference>
<dbReference type="PDB" id="6E0D">
    <property type="method" value="X-ray"/>
    <property type="resolution" value="2.24 A"/>
    <property type="chains" value="A=1-235"/>
</dbReference>
<dbReference type="PDB" id="6FJ6">
    <property type="method" value="X-ray"/>
    <property type="resolution" value="1.08 A"/>
    <property type="chains" value="A=23-229"/>
</dbReference>
<dbReference type="PDB" id="6FJ8">
    <property type="method" value="X-ray"/>
    <property type="resolution" value="1.50 A"/>
    <property type="chains" value="A=23-229"/>
</dbReference>
<dbReference type="PDB" id="6FJ9">
    <property type="method" value="X-ray"/>
    <property type="resolution" value="1.50 A"/>
    <property type="chains" value="A=23-229"/>
</dbReference>
<dbReference type="PDB" id="6G89">
    <property type="method" value="X-ray"/>
    <property type="resolution" value="2.36 A"/>
    <property type="chains" value="C=23-228"/>
</dbReference>
<dbReference type="PDB" id="6O8A">
    <property type="method" value="X-ray"/>
    <property type="resolution" value="2.60 A"/>
    <property type="chains" value="A=23-229"/>
</dbReference>
<dbReference type="PDB" id="6RVO">
    <property type="method" value="X-ray"/>
    <property type="resolution" value="1.97 A"/>
    <property type="chains" value="A=23-229"/>
</dbReference>
<dbReference type="PDB" id="6S19">
    <property type="method" value="X-ray"/>
    <property type="resolution" value="2.65 A"/>
    <property type="chains" value="A=23-229"/>
</dbReference>
<dbReference type="PDB" id="6S1D">
    <property type="method" value="X-ray"/>
    <property type="resolution" value="2.65 A"/>
    <property type="chains" value="A=23-229"/>
</dbReference>
<dbReference type="PDB" id="6S1E">
    <property type="method" value="X-ray"/>
    <property type="resolution" value="1.95 A"/>
    <property type="chains" value="A=23-229"/>
</dbReference>
<dbReference type="PDB" id="6S1G">
    <property type="method" value="X-ray"/>
    <property type="resolution" value="2.00 A"/>
    <property type="chains" value="A=23-229"/>
</dbReference>
<dbReference type="PDB" id="6SRJ">
    <property type="method" value="X-ray"/>
    <property type="resolution" value="2.30 A"/>
    <property type="chains" value="A=23-229"/>
</dbReference>
<dbReference type="PDB" id="6SRK">
    <property type="method" value="X-ray"/>
    <property type="resolution" value="2.30 A"/>
    <property type="chains" value="A=23-229"/>
</dbReference>
<dbReference type="PDB" id="6SRL">
    <property type="method" value="X-ray"/>
    <property type="resolution" value="2.30 A"/>
    <property type="chains" value="A=23-229"/>
</dbReference>
<dbReference type="PDB" id="6SRO">
    <property type="method" value="X-ray"/>
    <property type="resolution" value="2.30 A"/>
    <property type="chains" value="A=23-229"/>
</dbReference>
<dbReference type="PDB" id="6SRP">
    <property type="method" value="X-ray"/>
    <property type="resolution" value="2.30 A"/>
    <property type="chains" value="A=23-229"/>
</dbReference>
<dbReference type="PDB" id="6SRQ">
    <property type="method" value="X-ray"/>
    <property type="resolution" value="2.30 A"/>
    <property type="chains" value="A=23-229"/>
</dbReference>
<dbReference type="PDB" id="6YBX">
    <property type="method" value="X-ray"/>
    <property type="resolution" value="1.14 A"/>
    <property type="chains" value="A=23-229"/>
</dbReference>
<dbReference type="PDB" id="6YC5">
    <property type="method" value="X-ray"/>
    <property type="resolution" value="1.35 A"/>
    <property type="chains" value="A=23-229"/>
</dbReference>
<dbReference type="PDB" id="6ZHN">
    <property type="method" value="EM"/>
    <property type="resolution" value="2.76 A"/>
    <property type="chains" value="A=23-229"/>
</dbReference>
<dbReference type="PDB" id="7AC3">
    <property type="method" value="X-ray"/>
    <property type="resolution" value="1.65 A"/>
    <property type="chains" value="A=23-229"/>
</dbReference>
<dbReference type="PDB" id="7AT6">
    <property type="method" value="X-ray"/>
    <property type="resolution" value="1.46 A"/>
    <property type="chains" value="A=23-229"/>
</dbReference>
<dbReference type="PDB" id="7LFG">
    <property type="method" value="X-ray"/>
    <property type="resolution" value="1.22 A"/>
    <property type="chains" value="A=23-229"/>
</dbReference>
<dbReference type="PDB" id="7LJV">
    <property type="method" value="X-ray"/>
    <property type="resolution" value="1.48 A"/>
    <property type="chains" value="A=23-229"/>
</dbReference>
<dbReference type="PDB" id="7LJW">
    <property type="method" value="X-ray"/>
    <property type="resolution" value="1.22 A"/>
    <property type="chains" value="A=23-229"/>
</dbReference>
<dbReference type="PDB" id="7LJZ">
    <property type="method" value="X-ray"/>
    <property type="resolution" value="1.29 A"/>
    <property type="chains" value="A=23-229"/>
</dbReference>
<dbReference type="PDB" id="7LK5">
    <property type="method" value="X-ray"/>
    <property type="resolution" value="1.38 A"/>
    <property type="chains" value="A=23-229"/>
</dbReference>
<dbReference type="PDB" id="7LK6">
    <property type="method" value="X-ray"/>
    <property type="resolution" value="1.48 A"/>
    <property type="chains" value="A=23-229"/>
</dbReference>
<dbReference type="PDB" id="7LNB">
    <property type="method" value="X-ray"/>
    <property type="resolution" value="1.22 A"/>
    <property type="chains" value="A=23-229"/>
</dbReference>
<dbReference type="PDB" id="7LNC">
    <property type="method" value="X-ray"/>
    <property type="resolution" value="1.22 A"/>
    <property type="chains" value="A=23-229"/>
</dbReference>
<dbReference type="PDB" id="7LND">
    <property type="method" value="X-ray"/>
    <property type="resolution" value="1.22 A"/>
    <property type="chains" value="A=23-229"/>
</dbReference>
<dbReference type="PDB" id="7O44">
    <property type="method" value="X-ray"/>
    <property type="resolution" value="2.00 A"/>
    <property type="chains" value="A=23-229"/>
</dbReference>
<dbReference type="PDB" id="7O51">
    <property type="method" value="X-ray"/>
    <property type="resolution" value="2.20 A"/>
    <property type="chains" value="A=23-229"/>
</dbReference>
<dbReference type="PDB" id="7O53">
    <property type="method" value="X-ray"/>
    <property type="resolution" value="2.20 A"/>
    <property type="chains" value="A=23-229"/>
</dbReference>
<dbReference type="PDB" id="7O5J">
    <property type="method" value="X-ray"/>
    <property type="resolution" value="2.05 A"/>
    <property type="chains" value="A=23-229"/>
</dbReference>
<dbReference type="PDB" id="7O5K">
    <property type="method" value="X-ray"/>
    <property type="resolution" value="2.05 A"/>
    <property type="chains" value="A=23-229"/>
</dbReference>
<dbReference type="PDB" id="7VCG">
    <property type="method" value="X-ray"/>
    <property type="resolution" value="1.25 A"/>
    <property type="chains" value="A=23-228"/>
</dbReference>
<dbReference type="PDB" id="7WXT">
    <property type="method" value="X-ray"/>
    <property type="resolution" value="1.70 A"/>
    <property type="chains" value="A=23-228"/>
</dbReference>
<dbReference type="PDB" id="8A9F">
    <property type="method" value="X-ray"/>
    <property type="resolution" value="1.88 A"/>
    <property type="chains" value="AAA=23-229"/>
</dbReference>
<dbReference type="PDB" id="8ENA">
    <property type="method" value="X-ray"/>
    <property type="resolution" value="2.50 A"/>
    <property type="chains" value="A=23-229"/>
</dbReference>
<dbReference type="PDB" id="8F01">
    <property type="method" value="X-ray"/>
    <property type="resolution" value="1.80 A"/>
    <property type="chains" value="A=23-229"/>
</dbReference>
<dbReference type="PDB" id="8F03">
    <property type="method" value="X-ray"/>
    <property type="resolution" value="1.39 A"/>
    <property type="chains" value="A=23-229"/>
</dbReference>
<dbReference type="PDB" id="8FZW">
    <property type="method" value="X-ray"/>
    <property type="resolution" value="1.48 A"/>
    <property type="chains" value="A=23-229"/>
</dbReference>
<dbReference type="PDB" id="8HVE">
    <property type="method" value="X-ray"/>
    <property type="resolution" value="1.13 A"/>
    <property type="chains" value="A=23-229"/>
</dbReference>
<dbReference type="PDB" id="8HVF">
    <property type="method" value="X-ray"/>
    <property type="resolution" value="1.13 A"/>
    <property type="chains" value="A=23-229"/>
</dbReference>
<dbReference type="PDB" id="8JZ8">
    <property type="method" value="X-ray"/>
    <property type="resolution" value="0.89 A"/>
    <property type="chains" value="A=23-229"/>
</dbReference>
<dbReference type="PDB" id="8RS2">
    <property type="method" value="X-ray"/>
    <property type="resolution" value="1.70 A"/>
    <property type="chains" value="X=1-235"/>
</dbReference>
<dbReference type="PDB" id="8RS3">
    <property type="method" value="X-ray"/>
    <property type="resolution" value="1.70 A"/>
    <property type="chains" value="X=1-235"/>
</dbReference>
<dbReference type="PDB" id="8RSD">
    <property type="method" value="X-ray"/>
    <property type="resolution" value="1.70 A"/>
    <property type="chains" value="X=1-235"/>
</dbReference>
<dbReference type="PDB" id="8YK6">
    <property type="method" value="X-ray"/>
    <property type="resolution" value="0.99 A"/>
    <property type="chains" value="A=23-229"/>
</dbReference>
<dbReference type="PDB" id="9FTS">
    <property type="method" value="X-ray"/>
    <property type="resolution" value="1.75 A"/>
    <property type="chains" value="A=23-229"/>
</dbReference>
<dbReference type="PDB" id="9FTU">
    <property type="method" value="X-ray"/>
    <property type="resolution" value="1.75 A"/>
    <property type="chains" value="A=23-229"/>
</dbReference>
<dbReference type="PDB" id="9FTV">
    <property type="method" value="X-ray"/>
    <property type="resolution" value="1.75 A"/>
    <property type="chains" value="A=23-229"/>
</dbReference>
<dbReference type="PDB" id="9FX4">
    <property type="method" value="X-ray"/>
    <property type="resolution" value="1.59 A"/>
    <property type="chains" value="A=1-235"/>
</dbReference>
<dbReference type="PDB" id="9FX5">
    <property type="method" value="X-ray"/>
    <property type="resolution" value="1.59 A"/>
    <property type="chains" value="A=1-235"/>
</dbReference>
<dbReference type="PDB" id="9G2J">
    <property type="method" value="X-ray"/>
    <property type="resolution" value="1.69 A"/>
    <property type="chains" value="A=23-229"/>
</dbReference>
<dbReference type="PDBsum" id="1LR2"/>
<dbReference type="PDBsum" id="1LR3"/>
<dbReference type="PDBsum" id="1LXZ"/>
<dbReference type="PDBsum" id="1LY0"/>
<dbReference type="PDBsum" id="1PP3"/>
<dbReference type="PDBsum" id="1RQW"/>
<dbReference type="PDBsum" id="1THI"/>
<dbReference type="PDBsum" id="1THU"/>
<dbReference type="PDBsum" id="1THV"/>
<dbReference type="PDBsum" id="1THW"/>
<dbReference type="PDBsum" id="2A7I"/>
<dbReference type="PDBsum" id="2BLR"/>
<dbReference type="PDBsum" id="2BLU"/>
<dbReference type="PDBsum" id="2D8O"/>
<dbReference type="PDBsum" id="2D8P"/>
<dbReference type="PDBsum" id="2G4Y"/>
<dbReference type="PDBsum" id="2OQN"/>
<dbReference type="PDBsum" id="2PE7"/>
<dbReference type="PDBsum" id="2VHK"/>
<dbReference type="PDBsum" id="2VHR"/>
<dbReference type="PDBsum" id="2VI1"/>
<dbReference type="PDBsum" id="2VI2"/>
<dbReference type="PDBsum" id="2VI3"/>
<dbReference type="PDBsum" id="2VI4"/>
<dbReference type="PDBsum" id="2VU6"/>
<dbReference type="PDBsum" id="2VU7"/>
<dbReference type="PDBsum" id="2WBZ"/>
<dbReference type="PDBsum" id="3AL7"/>
<dbReference type="PDBsum" id="3ALD"/>
<dbReference type="PDBsum" id="3DZN"/>
<dbReference type="PDBsum" id="3DZP"/>
<dbReference type="PDBsum" id="3DZR"/>
<dbReference type="PDBsum" id="3E0A"/>
<dbReference type="PDBsum" id="3E3S"/>
<dbReference type="PDBsum" id="3N02"/>
<dbReference type="PDBsum" id="3N03"/>
<dbReference type="PDBsum" id="3QY5"/>
<dbReference type="PDBsum" id="3V7V"/>
<dbReference type="PDBsum" id="3V82"/>
<dbReference type="PDBsum" id="3V84"/>
<dbReference type="PDBsum" id="3V87"/>
<dbReference type="PDBsum" id="3V88"/>
<dbReference type="PDBsum" id="3V8A"/>
<dbReference type="PDBsum" id="3VCE"/>
<dbReference type="PDBsum" id="3VCG"/>
<dbReference type="PDBsum" id="3VCH"/>
<dbReference type="PDBsum" id="3VCI"/>
<dbReference type="PDBsum" id="3VCJ"/>
<dbReference type="PDBsum" id="3VCK"/>
<dbReference type="PDBsum" id="3VHF"/>
<dbReference type="PDBsum" id="3VHG"/>
<dbReference type="PDBsum" id="3VJQ"/>
<dbReference type="PDBsum" id="3WXS"/>
<dbReference type="PDBsum" id="3X3O"/>
<dbReference type="PDBsum" id="3X3P"/>
<dbReference type="PDBsum" id="3X3Q"/>
<dbReference type="PDBsum" id="3X3R"/>
<dbReference type="PDBsum" id="3X3S"/>
<dbReference type="PDBsum" id="3X3T"/>
<dbReference type="PDBsum" id="3ZEJ"/>
<dbReference type="PDBsum" id="4AXR"/>
<dbReference type="PDBsum" id="4AXU"/>
<dbReference type="PDBsum" id="4BAL"/>
<dbReference type="PDBsum" id="4BAR"/>
<dbReference type="PDBsum" id="4C3C"/>
<dbReference type="PDBsum" id="4DC5"/>
<dbReference type="PDBsum" id="4DC6"/>
<dbReference type="PDBsum" id="4DIY"/>
<dbReference type="PDBsum" id="4DIZ"/>
<dbReference type="PDBsum" id="4DJ0"/>
<dbReference type="PDBsum" id="4DJ1"/>
<dbReference type="PDBsum" id="4EK0"/>
<dbReference type="PDBsum" id="4EKA"/>
<dbReference type="PDBsum" id="4EKB"/>
<dbReference type="PDBsum" id="4EKH"/>
<dbReference type="PDBsum" id="4EKO"/>
<dbReference type="PDBsum" id="4EKT"/>
<dbReference type="PDBsum" id="4EL2"/>
<dbReference type="PDBsum" id="4EL3"/>
<dbReference type="PDBsum" id="4EL7"/>
<dbReference type="PDBsum" id="4ELA"/>
<dbReference type="PDBsum" id="4TVT"/>
<dbReference type="PDBsum" id="4XVB"/>
<dbReference type="PDBsum" id="4ZG3"/>
<dbReference type="PDBsum" id="4ZXR"/>
<dbReference type="PDBsum" id="5A47"/>
<dbReference type="PDBsum" id="5AMZ"/>
<dbReference type="PDBsum" id="5AVG"/>
<dbReference type="PDBsum" id="5FGT"/>
<dbReference type="PDBsum" id="5FGX"/>
<dbReference type="PDBsum" id="5GQP"/>
<dbReference type="PDBsum" id="5JVX"/>
<dbReference type="PDBsum" id="5K7Q"/>
<dbReference type="PDBsum" id="5KVW"/>
<dbReference type="PDBsum" id="5KVX"/>
<dbReference type="PDBsum" id="5KVZ"/>
<dbReference type="PDBsum" id="5KW0"/>
<dbReference type="PDBsum" id="5KW3"/>
<dbReference type="PDBsum" id="5KW4"/>
<dbReference type="PDBsum" id="5KW5"/>
<dbReference type="PDBsum" id="5KW7"/>
<dbReference type="PDBsum" id="5KW8"/>
<dbReference type="PDBsum" id="5L4R"/>
<dbReference type="PDBsum" id="5LH0"/>
<dbReference type="PDBsum" id="5LH1"/>
<dbReference type="PDBsum" id="5LH3"/>
<dbReference type="PDBsum" id="5LH5"/>
<dbReference type="PDBsum" id="5LH6"/>
<dbReference type="PDBsum" id="5LH7"/>
<dbReference type="PDBsum" id="5LMH"/>
<dbReference type="PDBsum" id="5LN0"/>
<dbReference type="PDBsum" id="5MJG"/>
<dbReference type="PDBsum" id="5SW0"/>
<dbReference type="PDBsum" id="5SW1"/>
<dbReference type="PDBsum" id="5SW2"/>
<dbReference type="PDBsum" id="5T3G"/>
<dbReference type="PDBsum" id="5TCL"/>
<dbReference type="PDBsum" id="5WR8"/>
<dbReference type="PDBsum" id="5X9L"/>
<dbReference type="PDBsum" id="5X9M"/>
<dbReference type="PDBsum" id="5YYP"/>
<dbReference type="PDBsum" id="5YYQ"/>
<dbReference type="PDBsum" id="5YYR"/>
<dbReference type="PDBsum" id="6C5Y"/>
<dbReference type="PDBsum" id="6C6W"/>
<dbReference type="PDBsum" id="6COA"/>
<dbReference type="PDBsum" id="6E0D"/>
<dbReference type="PDBsum" id="6FJ6"/>
<dbReference type="PDBsum" id="6FJ8"/>
<dbReference type="PDBsum" id="6FJ9"/>
<dbReference type="PDBsum" id="6G89"/>
<dbReference type="PDBsum" id="6O8A"/>
<dbReference type="PDBsum" id="6RVO"/>
<dbReference type="PDBsum" id="6S19"/>
<dbReference type="PDBsum" id="6S1D"/>
<dbReference type="PDBsum" id="6S1E"/>
<dbReference type="PDBsum" id="6S1G"/>
<dbReference type="PDBsum" id="6SRJ"/>
<dbReference type="PDBsum" id="6SRK"/>
<dbReference type="PDBsum" id="6SRL"/>
<dbReference type="PDBsum" id="6SRO"/>
<dbReference type="PDBsum" id="6SRP"/>
<dbReference type="PDBsum" id="6SRQ"/>
<dbReference type="PDBsum" id="6YBX"/>
<dbReference type="PDBsum" id="6YC5"/>
<dbReference type="PDBsum" id="6ZHN"/>
<dbReference type="PDBsum" id="7AC3"/>
<dbReference type="PDBsum" id="7AT6"/>
<dbReference type="PDBsum" id="7LFG"/>
<dbReference type="PDBsum" id="7LJV"/>
<dbReference type="PDBsum" id="7LJW"/>
<dbReference type="PDBsum" id="7LJZ"/>
<dbReference type="PDBsum" id="7LK5"/>
<dbReference type="PDBsum" id="7LK6"/>
<dbReference type="PDBsum" id="7LNB"/>
<dbReference type="PDBsum" id="7LNC"/>
<dbReference type="PDBsum" id="7LND"/>
<dbReference type="PDBsum" id="7O44"/>
<dbReference type="PDBsum" id="7O51"/>
<dbReference type="PDBsum" id="7O53"/>
<dbReference type="PDBsum" id="7O5J"/>
<dbReference type="PDBsum" id="7O5K"/>
<dbReference type="PDBsum" id="7VCG"/>
<dbReference type="PDBsum" id="7WXT"/>
<dbReference type="PDBsum" id="8A9F"/>
<dbReference type="PDBsum" id="8ENA"/>
<dbReference type="PDBsum" id="8F01"/>
<dbReference type="PDBsum" id="8F03"/>
<dbReference type="PDBsum" id="8FZW"/>
<dbReference type="PDBsum" id="8HVE"/>
<dbReference type="PDBsum" id="8HVF"/>
<dbReference type="PDBsum" id="8JZ8"/>
<dbReference type="PDBsum" id="8RS2"/>
<dbReference type="PDBsum" id="8RS3"/>
<dbReference type="PDBsum" id="8RSD"/>
<dbReference type="PDBsum" id="8YK6"/>
<dbReference type="PDBsum" id="9FTS"/>
<dbReference type="PDBsum" id="9FTU"/>
<dbReference type="PDBsum" id="9FTV"/>
<dbReference type="PDBsum" id="9FX4"/>
<dbReference type="PDBsum" id="9FX5"/>
<dbReference type="PDBsum" id="9G2J"/>
<dbReference type="EMDB" id="EMD-8219"/>
<dbReference type="PCDDB" id="P02883"/>
<dbReference type="SMR" id="P02883"/>
<dbReference type="Allergome" id="9233">
    <property type="allergen name" value="Tha da TLP"/>
</dbReference>
<dbReference type="EvolutionaryTrace" id="P02883"/>
<dbReference type="GO" id="GO:0031410">
    <property type="term" value="C:cytoplasmic vesicle"/>
    <property type="evidence" value="ECO:0007669"/>
    <property type="project" value="UniProtKB-KW"/>
</dbReference>
<dbReference type="CDD" id="cd09217">
    <property type="entry name" value="TLP-P"/>
    <property type="match status" value="1"/>
</dbReference>
<dbReference type="FunFam" id="2.60.110.10:FF:000003">
    <property type="entry name" value="Thaumatin I"/>
    <property type="match status" value="1"/>
</dbReference>
<dbReference type="Gene3D" id="2.60.110.10">
    <property type="entry name" value="Thaumatin"/>
    <property type="match status" value="1"/>
</dbReference>
<dbReference type="InterPro" id="IPR037176">
    <property type="entry name" value="Osmotin/thaumatin-like_sf"/>
</dbReference>
<dbReference type="InterPro" id="IPR001938">
    <property type="entry name" value="Thaumatin"/>
</dbReference>
<dbReference type="InterPro" id="IPR017949">
    <property type="entry name" value="Thaumatin_CS"/>
</dbReference>
<dbReference type="PANTHER" id="PTHR31048">
    <property type="entry name" value="OS03G0233200 PROTEIN"/>
    <property type="match status" value="1"/>
</dbReference>
<dbReference type="Pfam" id="PF00314">
    <property type="entry name" value="Thaumatin"/>
    <property type="match status" value="1"/>
</dbReference>
<dbReference type="PIRSF" id="PIRSF002703">
    <property type="entry name" value="Thaumatin"/>
    <property type="match status" value="1"/>
</dbReference>
<dbReference type="PRINTS" id="PR00347">
    <property type="entry name" value="THAUMATIN"/>
</dbReference>
<dbReference type="SMART" id="SM00205">
    <property type="entry name" value="THN"/>
    <property type="match status" value="1"/>
</dbReference>
<dbReference type="SUPFAM" id="SSF49870">
    <property type="entry name" value="Osmotin, thaumatin-like protein"/>
    <property type="match status" value="1"/>
</dbReference>
<dbReference type="PROSITE" id="PS00316">
    <property type="entry name" value="THAUMATIN_1"/>
    <property type="match status" value="1"/>
</dbReference>
<dbReference type="PROSITE" id="PS51367">
    <property type="entry name" value="THAUMATIN_2"/>
    <property type="match status" value="1"/>
</dbReference>
<feature type="signal peptide" evidence="5">
    <location>
        <begin position="1"/>
        <end position="22"/>
    </location>
</feature>
<feature type="chain" id="PRO_0000096221" description="Thaumatin I" evidence="5">
    <location>
        <begin position="23"/>
        <end position="229"/>
    </location>
</feature>
<feature type="propeptide" id="PRO_0000443721" description="Removed in mature form" evidence="5">
    <location>
        <begin position="230"/>
        <end position="235"/>
    </location>
</feature>
<feature type="disulfide bond" evidence="1 2 3 4 9 10">
    <location>
        <begin position="31"/>
        <end position="226"/>
    </location>
</feature>
<feature type="disulfide bond" evidence="1 2 3 4 9 10">
    <location>
        <begin position="78"/>
        <end position="88"/>
    </location>
</feature>
<feature type="disulfide bond" evidence="1 2 3 4 9 10">
    <location>
        <begin position="93"/>
        <end position="99"/>
    </location>
</feature>
<feature type="disulfide bond" evidence="1 2 3 4 9 10">
    <location>
        <begin position="143"/>
        <end position="215"/>
    </location>
</feature>
<feature type="disulfide bond" evidence="1 2 3 4 9 10">
    <location>
        <begin position="148"/>
        <end position="199"/>
    </location>
</feature>
<feature type="disulfide bond" evidence="1 2 3 4 9 10">
    <location>
        <begin position="156"/>
        <end position="167"/>
    </location>
</feature>
<feature type="disulfide bond" evidence="1 2 3 4 9 10">
    <location>
        <begin position="171"/>
        <end position="180"/>
    </location>
</feature>
<feature type="disulfide bond" evidence="1 2 3 4 9 10">
    <location>
        <begin position="181"/>
        <end position="186"/>
    </location>
</feature>
<feature type="strand" evidence="13">
    <location>
        <begin position="24"/>
        <end position="29"/>
    </location>
</feature>
<feature type="strand" evidence="13">
    <location>
        <begin position="31"/>
        <end position="33"/>
    </location>
</feature>
<feature type="strand" evidence="13">
    <location>
        <begin position="35"/>
        <end position="40"/>
    </location>
</feature>
<feature type="strand" evidence="13">
    <location>
        <begin position="42"/>
        <end position="53"/>
    </location>
</feature>
<feature type="strand" evidence="13">
    <location>
        <begin position="58"/>
        <end position="62"/>
    </location>
</feature>
<feature type="strand" evidence="13">
    <location>
        <begin position="69"/>
        <end position="80"/>
    </location>
</feature>
<feature type="strand" evidence="13">
    <location>
        <begin position="84"/>
        <end position="91"/>
    </location>
</feature>
<feature type="strand" evidence="13">
    <location>
        <begin position="96"/>
        <end position="98"/>
    </location>
</feature>
<feature type="strand" evidence="13">
    <location>
        <begin position="109"/>
        <end position="116"/>
    </location>
</feature>
<feature type="strand" evidence="13">
    <location>
        <begin position="119"/>
        <end position="125"/>
    </location>
</feature>
<feature type="strand" evidence="12">
    <location>
        <begin position="130"/>
        <end position="132"/>
    </location>
</feature>
<feature type="strand" evidence="13">
    <location>
        <begin position="134"/>
        <end position="143"/>
    </location>
</feature>
<feature type="strand" evidence="13">
    <location>
        <begin position="146"/>
        <end position="148"/>
    </location>
</feature>
<feature type="helix" evidence="13">
    <location>
        <begin position="152"/>
        <end position="155"/>
    </location>
</feature>
<feature type="helix" evidence="13">
    <location>
        <begin position="158"/>
        <end position="160"/>
    </location>
</feature>
<feature type="strand" evidence="13">
    <location>
        <begin position="165"/>
        <end position="167"/>
    </location>
</feature>
<feature type="helix" evidence="13">
    <location>
        <begin position="170"/>
        <end position="174"/>
    </location>
</feature>
<feature type="helix" evidence="13">
    <location>
        <begin position="177"/>
        <end position="180"/>
    </location>
</feature>
<feature type="turn" evidence="12">
    <location>
        <begin position="181"/>
        <end position="183"/>
    </location>
</feature>
<feature type="helix" evidence="13">
    <location>
        <begin position="190"/>
        <end position="198"/>
    </location>
</feature>
<feature type="strand" evidence="11">
    <location>
        <begin position="202"/>
        <end position="205"/>
    </location>
</feature>
<feature type="strand" evidence="13">
    <location>
        <begin position="213"/>
        <end position="216"/>
    </location>
</feature>
<feature type="strand" evidence="13">
    <location>
        <begin position="221"/>
        <end position="226"/>
    </location>
</feature>
<organism>
    <name type="scientific">Thaumatococcus daniellii</name>
    <name type="common">Katemfe</name>
    <name type="synonym">Phrynium daniellii</name>
    <dbReference type="NCBI Taxonomy" id="4621"/>
    <lineage>
        <taxon>Eukaryota</taxon>
        <taxon>Viridiplantae</taxon>
        <taxon>Streptophyta</taxon>
        <taxon>Embryophyta</taxon>
        <taxon>Tracheophyta</taxon>
        <taxon>Spermatophyta</taxon>
        <taxon>Magnoliopsida</taxon>
        <taxon>Liliopsida</taxon>
        <taxon>Zingiberales</taxon>
        <taxon>Marantaceae</taxon>
        <taxon>Thaumatococcus</taxon>
    </lineage>
</organism>
<proteinExistence type="evidence at protein level"/>
<accession>P02883</accession>
<accession>A1IIJ1</accession>
<accession>Q8RVT0</accession>
<comment type="function">
    <text evidence="8">Taste-modifying protein; intensely sweet-tasting. It is 100000 times sweeter than sucrose on a molar basis.</text>
</comment>
<comment type="subcellular location">
    <subcellularLocation>
        <location>Cytoplasmic vesicle</location>
    </subcellularLocation>
    <text evidence="7">Thaumatin accumulates in vesicle-like organelles.</text>
</comment>
<comment type="similarity">
    <text evidence="1">Belongs to the thaumatin family.</text>
</comment>
<keyword id="KW-0002">3D-structure</keyword>
<keyword id="KW-0968">Cytoplasmic vesicle</keyword>
<keyword id="KW-0903">Direct protein sequencing</keyword>
<keyword id="KW-1015">Disulfide bond</keyword>
<keyword id="KW-0732">Signal</keyword>
<keyword id="KW-0776">Taste-modifying protein</keyword>
<evidence type="ECO:0000255" key="1">
    <source>
        <dbReference type="PROSITE-ProRule" id="PRU00699"/>
    </source>
</evidence>
<evidence type="ECO:0000269" key="2">
    <source>
    </source>
</evidence>
<evidence type="ECO:0000269" key="3">
    <source>
    </source>
</evidence>
<evidence type="ECO:0000269" key="4">
    <source>
    </source>
</evidence>
<evidence type="ECO:0000269" key="5">
    <source>
    </source>
</evidence>
<evidence type="ECO:0000303" key="6">
    <source>
    </source>
</evidence>
<evidence type="ECO:0000305" key="7"/>
<evidence type="ECO:0000305" key="8">
    <source>
    </source>
</evidence>
<evidence type="ECO:0007744" key="9">
    <source>
        <dbReference type="PDB" id="2G4Y"/>
    </source>
</evidence>
<evidence type="ECO:0007744" key="10">
    <source>
        <dbReference type="PDB" id="3WXS"/>
    </source>
</evidence>
<evidence type="ECO:0007829" key="11">
    <source>
        <dbReference type="PDB" id="2D8O"/>
    </source>
</evidence>
<evidence type="ECO:0007829" key="12">
    <source>
        <dbReference type="PDB" id="5X9L"/>
    </source>
</evidence>
<evidence type="ECO:0007829" key="13">
    <source>
        <dbReference type="PDB" id="8JZ8"/>
    </source>
</evidence>